<name>BPT_RHOPT</name>
<feature type="chain" id="PRO_1000131995" description="Aspartate/glutamate leucyltransferase">
    <location>
        <begin position="1"/>
        <end position="258"/>
    </location>
</feature>
<comment type="function">
    <text evidence="1">Functions in the N-end rule pathway of protein degradation where it conjugates Leu from its aminoacyl-tRNA to the N-termini of proteins containing an N-terminal aspartate or glutamate.</text>
</comment>
<comment type="catalytic activity">
    <reaction evidence="1">
        <text>N-terminal L-glutamyl-[protein] + L-leucyl-tRNA(Leu) = N-terminal L-leucyl-L-glutamyl-[protein] + tRNA(Leu) + H(+)</text>
        <dbReference type="Rhea" id="RHEA:50412"/>
        <dbReference type="Rhea" id="RHEA-COMP:9613"/>
        <dbReference type="Rhea" id="RHEA-COMP:9622"/>
        <dbReference type="Rhea" id="RHEA-COMP:12664"/>
        <dbReference type="Rhea" id="RHEA-COMP:12668"/>
        <dbReference type="ChEBI" id="CHEBI:15378"/>
        <dbReference type="ChEBI" id="CHEBI:64721"/>
        <dbReference type="ChEBI" id="CHEBI:78442"/>
        <dbReference type="ChEBI" id="CHEBI:78494"/>
        <dbReference type="ChEBI" id="CHEBI:133041"/>
        <dbReference type="EC" id="2.3.2.29"/>
    </reaction>
</comment>
<comment type="catalytic activity">
    <reaction evidence="1">
        <text>N-terminal L-aspartyl-[protein] + L-leucyl-tRNA(Leu) = N-terminal L-leucyl-L-aspartyl-[protein] + tRNA(Leu) + H(+)</text>
        <dbReference type="Rhea" id="RHEA:50420"/>
        <dbReference type="Rhea" id="RHEA-COMP:9613"/>
        <dbReference type="Rhea" id="RHEA-COMP:9622"/>
        <dbReference type="Rhea" id="RHEA-COMP:12669"/>
        <dbReference type="Rhea" id="RHEA-COMP:12674"/>
        <dbReference type="ChEBI" id="CHEBI:15378"/>
        <dbReference type="ChEBI" id="CHEBI:64720"/>
        <dbReference type="ChEBI" id="CHEBI:78442"/>
        <dbReference type="ChEBI" id="CHEBI:78494"/>
        <dbReference type="ChEBI" id="CHEBI:133042"/>
        <dbReference type="EC" id="2.3.2.29"/>
    </reaction>
</comment>
<comment type="subcellular location">
    <subcellularLocation>
        <location evidence="1">Cytoplasm</location>
    </subcellularLocation>
</comment>
<comment type="similarity">
    <text evidence="1">Belongs to the R-transferase family. Bpt subfamily.</text>
</comment>
<dbReference type="EC" id="2.3.2.29" evidence="1"/>
<dbReference type="EMBL" id="CP001096">
    <property type="protein sequence ID" value="ACF01494.1"/>
    <property type="molecule type" value="Genomic_DNA"/>
</dbReference>
<dbReference type="RefSeq" id="WP_012496133.1">
    <property type="nucleotide sequence ID" value="NC_011004.1"/>
</dbReference>
<dbReference type="SMR" id="B3QJI8"/>
<dbReference type="KEGG" id="rpt:Rpal_2986"/>
<dbReference type="HOGENOM" id="CLU_077607_1_0_5"/>
<dbReference type="OrthoDB" id="9782022at2"/>
<dbReference type="Proteomes" id="UP000001725">
    <property type="component" value="Chromosome"/>
</dbReference>
<dbReference type="GO" id="GO:0005737">
    <property type="term" value="C:cytoplasm"/>
    <property type="evidence" value="ECO:0007669"/>
    <property type="project" value="UniProtKB-SubCell"/>
</dbReference>
<dbReference type="GO" id="GO:0004057">
    <property type="term" value="F:arginyl-tRNA--protein transferase activity"/>
    <property type="evidence" value="ECO:0007669"/>
    <property type="project" value="InterPro"/>
</dbReference>
<dbReference type="GO" id="GO:0008914">
    <property type="term" value="F:leucyl-tRNA--protein transferase activity"/>
    <property type="evidence" value="ECO:0007669"/>
    <property type="project" value="UniProtKB-UniRule"/>
</dbReference>
<dbReference type="GO" id="GO:0071596">
    <property type="term" value="P:ubiquitin-dependent protein catabolic process via the N-end rule pathway"/>
    <property type="evidence" value="ECO:0007669"/>
    <property type="project" value="InterPro"/>
</dbReference>
<dbReference type="HAMAP" id="MF_00689">
    <property type="entry name" value="Bpt"/>
    <property type="match status" value="1"/>
</dbReference>
<dbReference type="InterPro" id="IPR016181">
    <property type="entry name" value="Acyl_CoA_acyltransferase"/>
</dbReference>
<dbReference type="InterPro" id="IPR017138">
    <property type="entry name" value="Asp_Glu_LeuTrfase"/>
</dbReference>
<dbReference type="InterPro" id="IPR030700">
    <property type="entry name" value="N-end_Aminoacyl_Trfase"/>
</dbReference>
<dbReference type="InterPro" id="IPR007472">
    <property type="entry name" value="N-end_Aminoacyl_Trfase_C"/>
</dbReference>
<dbReference type="InterPro" id="IPR007471">
    <property type="entry name" value="N-end_Aminoacyl_Trfase_N"/>
</dbReference>
<dbReference type="NCBIfam" id="NF002342">
    <property type="entry name" value="PRK01305.1-3"/>
    <property type="match status" value="1"/>
</dbReference>
<dbReference type="NCBIfam" id="NF002343">
    <property type="entry name" value="PRK01305.1-4"/>
    <property type="match status" value="1"/>
</dbReference>
<dbReference type="NCBIfam" id="NF002346">
    <property type="entry name" value="PRK01305.2-3"/>
    <property type="match status" value="1"/>
</dbReference>
<dbReference type="PANTHER" id="PTHR21367">
    <property type="entry name" value="ARGININE-TRNA-PROTEIN TRANSFERASE 1"/>
    <property type="match status" value="1"/>
</dbReference>
<dbReference type="PANTHER" id="PTHR21367:SF1">
    <property type="entry name" value="ARGINYL-TRNA--PROTEIN TRANSFERASE 1"/>
    <property type="match status" value="1"/>
</dbReference>
<dbReference type="Pfam" id="PF04377">
    <property type="entry name" value="ATE_C"/>
    <property type="match status" value="1"/>
</dbReference>
<dbReference type="Pfam" id="PF04376">
    <property type="entry name" value="ATE_N"/>
    <property type="match status" value="1"/>
</dbReference>
<dbReference type="PIRSF" id="PIRSF037208">
    <property type="entry name" value="ATE_pro_prd"/>
    <property type="match status" value="1"/>
</dbReference>
<dbReference type="SUPFAM" id="SSF55729">
    <property type="entry name" value="Acyl-CoA N-acyltransferases (Nat)"/>
    <property type="match status" value="1"/>
</dbReference>
<organism>
    <name type="scientific">Rhodopseudomonas palustris (strain TIE-1)</name>
    <dbReference type="NCBI Taxonomy" id="395960"/>
    <lineage>
        <taxon>Bacteria</taxon>
        <taxon>Pseudomonadati</taxon>
        <taxon>Pseudomonadota</taxon>
        <taxon>Alphaproteobacteria</taxon>
        <taxon>Hyphomicrobiales</taxon>
        <taxon>Nitrobacteraceae</taxon>
        <taxon>Rhodopseudomonas</taxon>
    </lineage>
</organism>
<proteinExistence type="inferred from homology"/>
<gene>
    <name evidence="1" type="primary">bpt</name>
    <name type="ordered locus">Rpal_2986</name>
</gene>
<sequence>MTQHSRDTPQFYLTAPSPCPYLPGRHERKVFTHLVGNKAGELNDLLTHGGFRRSQSIAYRPACDQCRACVSVRVIANEFKPSRNQRKLLARNADIVGEQRNPVPTSEQYSVFRAYLDQRHRHGGMADMTVLDYAMMVEDSHVQTRMIEYRKRTPDTGITGRGGELIAAALTDVLGDGLSMVYSFYEPNEQHRSLGTFMILDHIARARRLGLPYVYLGYWIEGSKKMDYKGRYLPQQRLAPSGWLRIDASGEMQPEPQD</sequence>
<evidence type="ECO:0000255" key="1">
    <source>
        <dbReference type="HAMAP-Rule" id="MF_00689"/>
    </source>
</evidence>
<protein>
    <recommendedName>
        <fullName evidence="1">Aspartate/glutamate leucyltransferase</fullName>
        <ecNumber evidence="1">2.3.2.29</ecNumber>
    </recommendedName>
</protein>
<keyword id="KW-0012">Acyltransferase</keyword>
<keyword id="KW-0963">Cytoplasm</keyword>
<keyword id="KW-0808">Transferase</keyword>
<reference key="1">
    <citation type="submission" date="2008-05" db="EMBL/GenBank/DDBJ databases">
        <title>Complete sequence of Rhodopseudomonas palustris TIE-1.</title>
        <authorList>
            <consortium name="US DOE Joint Genome Institute"/>
            <person name="Lucas S."/>
            <person name="Copeland A."/>
            <person name="Lapidus A."/>
            <person name="Glavina del Rio T."/>
            <person name="Dalin E."/>
            <person name="Tice H."/>
            <person name="Pitluck S."/>
            <person name="Chain P."/>
            <person name="Malfatti S."/>
            <person name="Shin M."/>
            <person name="Vergez L."/>
            <person name="Lang D."/>
            <person name="Schmutz J."/>
            <person name="Larimer F."/>
            <person name="Land M."/>
            <person name="Hauser L."/>
            <person name="Kyrpides N."/>
            <person name="Mikhailova N."/>
            <person name="Emerson D."/>
            <person name="Newman D.K."/>
            <person name="Roden E."/>
            <person name="Richardson P."/>
        </authorList>
    </citation>
    <scope>NUCLEOTIDE SEQUENCE [LARGE SCALE GENOMIC DNA]</scope>
    <source>
        <strain>TIE-1</strain>
    </source>
</reference>
<accession>B3QJI8</accession>